<feature type="signal peptide" evidence="2">
    <location>
        <begin position="1"/>
        <end position="25"/>
    </location>
</feature>
<feature type="chain" id="PRO_0000434713" description="AAA-ATPase At3g28610" evidence="2">
    <location>
        <begin position="26"/>
        <end position="474"/>
    </location>
</feature>
<feature type="binding site" evidence="2">
    <location>
        <begin position="244"/>
        <end position="251"/>
    </location>
    <ligand>
        <name>ATP</name>
        <dbReference type="ChEBI" id="CHEBI:30616"/>
    </ligand>
</feature>
<sequence>MMGNMFGSSLASLFFLWATIQQIFPNHLKIAIKEFFLSTIQQISFAKRFSDKFINFFSPYVQINFSEYEDYRVNHAFDPIETYLGAKATDKAKHLRASQVRESKGLVLKRDETKVRDEYEGIRVWWEMETDSAGYKTLKLTFHRRSRDIVTNSYIKYVVEEGKSIDAKNKKMKLFTNNPSSHWGSSKTSFWRYIDFEHPATFETLAMDPKKKEQILNDLAAFNNGKDYYKKIGKAWKRGYLLYGPPGTGKSTMIAAMANLLNYSIYDLELTAIQNNSELRKILTATSNKSIIVIEDIDCSLDLTGKRKKKESNLMIWRKDGDQDNEENKSFVTLSGLLNFIDGIWSACGQERIIVFTTNHLAKLDPALIRRGRMDMHIELSYCTFEAFKTLAKNYLDLDSHPLFSKIESLMKETNIAPADVAENLMKKNRETDADGSLNDLIESLERKKKVQIAQVDEHKEYSNKIVEAFRKLF</sequence>
<dbReference type="EC" id="3.6.1.-" evidence="1"/>
<dbReference type="EMBL" id="AP000420">
    <property type="protein sequence ID" value="BAB02176.1"/>
    <property type="molecule type" value="Genomic_DNA"/>
</dbReference>
<dbReference type="EMBL" id="CP002686">
    <property type="protein sequence ID" value="AEE77465.1"/>
    <property type="molecule type" value="Genomic_DNA"/>
</dbReference>
<dbReference type="RefSeq" id="NP_189502.2">
    <property type="nucleotide sequence ID" value="NM_113781.2"/>
</dbReference>
<dbReference type="SMR" id="Q9LJJ5"/>
<dbReference type="FunCoup" id="Q9LJJ5">
    <property type="interactions" value="1326"/>
</dbReference>
<dbReference type="STRING" id="3702.Q9LJJ5"/>
<dbReference type="iPTMnet" id="Q9LJJ5"/>
<dbReference type="PaxDb" id="3702-AT3G28610.1"/>
<dbReference type="ProteomicsDB" id="244573"/>
<dbReference type="DNASU" id="822491"/>
<dbReference type="EnsemblPlants" id="AT3G28610.1">
    <property type="protein sequence ID" value="AT3G28610.1"/>
    <property type="gene ID" value="AT3G28610"/>
</dbReference>
<dbReference type="GeneID" id="822491"/>
<dbReference type="Gramene" id="AT3G28610.1">
    <property type="protein sequence ID" value="AT3G28610.1"/>
    <property type="gene ID" value="AT3G28610"/>
</dbReference>
<dbReference type="KEGG" id="ath:AT3G28610"/>
<dbReference type="Araport" id="AT3G28610"/>
<dbReference type="TAIR" id="AT3G28610"/>
<dbReference type="eggNOG" id="KOG0743">
    <property type="taxonomic scope" value="Eukaryota"/>
</dbReference>
<dbReference type="HOGENOM" id="CLU_010189_0_1_1"/>
<dbReference type="InParanoid" id="Q9LJJ5"/>
<dbReference type="OMA" id="MWKHINF"/>
<dbReference type="PhylomeDB" id="Q9LJJ5"/>
<dbReference type="PRO" id="PR:Q9LJJ5"/>
<dbReference type="Proteomes" id="UP000006548">
    <property type="component" value="Chromosome 3"/>
</dbReference>
<dbReference type="ExpressionAtlas" id="Q9LJJ5">
    <property type="expression patterns" value="baseline and differential"/>
</dbReference>
<dbReference type="GO" id="GO:0005524">
    <property type="term" value="F:ATP binding"/>
    <property type="evidence" value="ECO:0007669"/>
    <property type="project" value="UniProtKB-KW"/>
</dbReference>
<dbReference type="GO" id="GO:0016887">
    <property type="term" value="F:ATP hydrolysis activity"/>
    <property type="evidence" value="ECO:0007669"/>
    <property type="project" value="InterPro"/>
</dbReference>
<dbReference type="GO" id="GO:0009651">
    <property type="term" value="P:response to salt stress"/>
    <property type="evidence" value="ECO:0000270"/>
    <property type="project" value="UniProtKB"/>
</dbReference>
<dbReference type="CDD" id="cd19510">
    <property type="entry name" value="RecA-like_BCS1"/>
    <property type="match status" value="1"/>
</dbReference>
<dbReference type="FunFam" id="3.40.50.300:FF:001122">
    <property type="entry name" value="AAA-ATPase ASD, mitochondrial"/>
    <property type="match status" value="1"/>
</dbReference>
<dbReference type="Gene3D" id="6.10.280.40">
    <property type="match status" value="1"/>
</dbReference>
<dbReference type="Gene3D" id="3.40.50.300">
    <property type="entry name" value="P-loop containing nucleotide triphosphate hydrolases"/>
    <property type="match status" value="1"/>
</dbReference>
<dbReference type="InterPro" id="IPR003593">
    <property type="entry name" value="AAA+_ATPase"/>
</dbReference>
<dbReference type="InterPro" id="IPR025753">
    <property type="entry name" value="AAA_N_dom"/>
</dbReference>
<dbReference type="InterPro" id="IPR003959">
    <property type="entry name" value="ATPase_AAA_core"/>
</dbReference>
<dbReference type="InterPro" id="IPR003960">
    <property type="entry name" value="ATPase_AAA_CS"/>
</dbReference>
<dbReference type="InterPro" id="IPR050747">
    <property type="entry name" value="Mitochondrial_chaperone_BCS1"/>
</dbReference>
<dbReference type="InterPro" id="IPR027417">
    <property type="entry name" value="P-loop_NTPase"/>
</dbReference>
<dbReference type="PANTHER" id="PTHR23070">
    <property type="entry name" value="BCS1 AAA-TYPE ATPASE"/>
    <property type="match status" value="1"/>
</dbReference>
<dbReference type="Pfam" id="PF00004">
    <property type="entry name" value="AAA"/>
    <property type="match status" value="1"/>
</dbReference>
<dbReference type="Pfam" id="PF14363">
    <property type="entry name" value="AAA_assoc"/>
    <property type="match status" value="1"/>
</dbReference>
<dbReference type="SMART" id="SM00382">
    <property type="entry name" value="AAA"/>
    <property type="match status" value="1"/>
</dbReference>
<dbReference type="SUPFAM" id="SSF52540">
    <property type="entry name" value="P-loop containing nucleoside triphosphate hydrolases"/>
    <property type="match status" value="1"/>
</dbReference>
<dbReference type="PROSITE" id="PS00674">
    <property type="entry name" value="AAA"/>
    <property type="match status" value="1"/>
</dbReference>
<organism evidence="7">
    <name type="scientific">Arabidopsis thaliana</name>
    <name type="common">Mouse-ear cress</name>
    <dbReference type="NCBI Taxonomy" id="3702"/>
    <lineage>
        <taxon>Eukaryota</taxon>
        <taxon>Viridiplantae</taxon>
        <taxon>Streptophyta</taxon>
        <taxon>Embryophyta</taxon>
        <taxon>Tracheophyta</taxon>
        <taxon>Spermatophyta</taxon>
        <taxon>Magnoliopsida</taxon>
        <taxon>eudicotyledons</taxon>
        <taxon>Gunneridae</taxon>
        <taxon>Pentapetalae</taxon>
        <taxon>rosids</taxon>
        <taxon>malvids</taxon>
        <taxon>Brassicales</taxon>
        <taxon>Brassicaceae</taxon>
        <taxon>Camelineae</taxon>
        <taxon>Arabidopsis</taxon>
    </lineage>
</organism>
<protein>
    <recommendedName>
        <fullName>AAA-ATPase At3g28610</fullName>
        <ecNumber evidence="1">3.6.1.-</ecNumber>
    </recommendedName>
</protein>
<keyword id="KW-0067">ATP-binding</keyword>
<keyword id="KW-0378">Hydrolase</keyword>
<keyword id="KW-0460">Magnesium</keyword>
<keyword id="KW-0547">Nucleotide-binding</keyword>
<keyword id="KW-1185">Reference proteome</keyword>
<keyword id="KW-0732">Signal</keyword>
<evidence type="ECO:0000250" key="1">
    <source>
        <dbReference type="UniProtKB" id="Q9FLD5"/>
    </source>
</evidence>
<evidence type="ECO:0000255" key="2"/>
<evidence type="ECO:0000269" key="3">
    <source>
    </source>
</evidence>
<evidence type="ECO:0000305" key="4"/>
<evidence type="ECO:0000312" key="5">
    <source>
        <dbReference type="EMBL" id="AEE77465.1"/>
    </source>
</evidence>
<evidence type="ECO:0000312" key="6">
    <source>
        <dbReference type="EMBL" id="BAB02176.1"/>
    </source>
</evidence>
<evidence type="ECO:0000312" key="7">
    <source>
        <dbReference type="Proteomes" id="UP000006548"/>
    </source>
</evidence>
<gene>
    <name evidence="5" type="ordered locus">At3g28610</name>
    <name evidence="6" type="ORF">MZN14.7</name>
</gene>
<comment type="catalytic activity">
    <reaction evidence="1">
        <text>ATP + H2O = ADP + phosphate + H(+)</text>
        <dbReference type="Rhea" id="RHEA:13065"/>
        <dbReference type="ChEBI" id="CHEBI:15377"/>
        <dbReference type="ChEBI" id="CHEBI:15378"/>
        <dbReference type="ChEBI" id="CHEBI:30616"/>
        <dbReference type="ChEBI" id="CHEBI:43474"/>
        <dbReference type="ChEBI" id="CHEBI:456216"/>
    </reaction>
</comment>
<comment type="cofactor">
    <cofactor evidence="1">
        <name>Mg(2+)</name>
        <dbReference type="ChEBI" id="CHEBI:18420"/>
    </cofactor>
</comment>
<comment type="induction">
    <text evidence="3">Induced in roots by salt stress.</text>
</comment>
<comment type="similarity">
    <text evidence="4">Belongs to the AAA ATPase family. BCS1 subfamily.</text>
</comment>
<reference key="1">
    <citation type="journal article" date="2000" name="DNA Res.">
        <title>Structural analysis of Arabidopsis thaliana chromosome 3. I. Sequence features of the regions of 4,504,864 bp covered by sixty P1 and TAC clones.</title>
        <authorList>
            <person name="Sato S."/>
            <person name="Nakamura Y."/>
            <person name="Kaneko T."/>
            <person name="Katoh T."/>
            <person name="Asamizu E."/>
            <person name="Tabata S."/>
        </authorList>
    </citation>
    <scope>NUCLEOTIDE SEQUENCE [LARGE SCALE GENOMIC DNA]</scope>
    <source>
        <strain>cv. Columbia</strain>
    </source>
</reference>
<reference key="2">
    <citation type="journal article" date="2017" name="Plant J.">
        <title>Araport11: a complete reannotation of the Arabidopsis thaliana reference genome.</title>
        <authorList>
            <person name="Cheng C.Y."/>
            <person name="Krishnakumar V."/>
            <person name="Chan A.P."/>
            <person name="Thibaud-Nissen F."/>
            <person name="Schobel S."/>
            <person name="Town C.D."/>
        </authorList>
    </citation>
    <scope>GENOME REANNOTATION</scope>
    <source>
        <strain>cv. Columbia</strain>
    </source>
</reference>
<reference key="3">
    <citation type="journal article" date="2006" name="J. Exp. Bot.">
        <title>Dissecting salt stress pathways.</title>
        <authorList>
            <person name="Ma S."/>
            <person name="Gong Q."/>
            <person name="Bohnert H.J."/>
        </authorList>
    </citation>
    <scope>INDUCTION BY SALT</scope>
    <source>
        <strain>cv. Columbia</strain>
    </source>
</reference>
<name>AATPB_ARATH</name>
<accession>Q9LJJ5</accession>
<proteinExistence type="evidence at transcript level"/>